<comment type="function">
    <text evidence="1">Catalyzes the condensation of acetyl-CoA with acetoacetyl-CoA to form 3-hydroxy-3-methylglutaryl-CoA (HMG-CoA). Functions in the mevalonate (MVA) pathway leading to isopentenyl diphosphate (IPP), a key precursor for the biosynthesis of isoprenoid compounds that are building blocks of archaeal membrane lipids.</text>
</comment>
<comment type="catalytic activity">
    <reaction evidence="1">
        <text>acetoacetyl-CoA + acetyl-CoA + H2O = (3S)-3-hydroxy-3-methylglutaryl-CoA + CoA + H(+)</text>
        <dbReference type="Rhea" id="RHEA:10188"/>
        <dbReference type="ChEBI" id="CHEBI:15377"/>
        <dbReference type="ChEBI" id="CHEBI:15378"/>
        <dbReference type="ChEBI" id="CHEBI:43074"/>
        <dbReference type="ChEBI" id="CHEBI:57286"/>
        <dbReference type="ChEBI" id="CHEBI:57287"/>
        <dbReference type="ChEBI" id="CHEBI:57288"/>
        <dbReference type="EC" id="2.3.3.10"/>
    </reaction>
    <physiologicalReaction direction="left-to-right" evidence="1">
        <dbReference type="Rhea" id="RHEA:10189"/>
    </physiologicalReaction>
</comment>
<comment type="pathway">
    <text evidence="1">Metabolic intermediate biosynthesis; (R)-mevalonate biosynthesis; (R)-mevalonate from acetyl-CoA: step 2/3.</text>
</comment>
<comment type="subunit">
    <text evidence="1">Interacts with acetoacetyl-CoA thiolase that catalyzes the precedent step in the pathway and with a DUF35 protein. The acetoacetyl-CoA thiolase/HMG-CoA synthase complex channels the intermediate via a fused CoA-binding site, which allows for efficient coupling of the endergonic thiolase reaction with the exergonic HMGCS reaction.</text>
</comment>
<comment type="similarity">
    <text evidence="1">Belongs to the thiolase-like superfamily. Archaeal HMG-CoA synthase family.</text>
</comment>
<name>HMGCS_SULAC</name>
<sequence>MRSGIVGWGAYIPRYRINVNEIANLWGLESQVVKNLGLSEKAVPDVDEDSTTMAWESSKNALRRANIDPSQIGVVLFGSESKVYAVKPTATILIDALGVTNDSLGADMEFACRGASAALRLVGGMVEASKIKYGLVIGSDTAQSNPGDVLELSSAAASVSYIVGPENEAGAVIEAAVSYTSDTPDFWRRDGMPYPVHGEGFTGEPAYFDHILSAVNLLFRENGYKISDFDYFVFHQPNGKFPLQVARKLEISMDKVKDGLVSPYIGNPYNASALLGLAKVLDIAKPGQRILVAPFGSGAGSDAFSILVTDKILEKQKLAPTVNYYIERKVLVSYSTYAKTTGKYKVYE</sequence>
<feature type="chain" id="PRO_1000184610" description="Hydroxymethylglutaryl-CoA synthase">
    <location>
        <begin position="1"/>
        <end position="348"/>
    </location>
</feature>
<feature type="active site" description="Proton donor/acceptor" evidence="1">
    <location>
        <position position="80"/>
    </location>
</feature>
<feature type="active site" description="Acyl-thioester intermediate" evidence="1">
    <location>
        <position position="112"/>
    </location>
</feature>
<feature type="active site" description="Proton donor/acceptor" evidence="1">
    <location>
        <position position="235"/>
    </location>
</feature>
<feature type="binding site" evidence="1">
    <location>
        <position position="29"/>
    </location>
    <ligand>
        <name>(3S)-3-hydroxy-3-methylglutaryl-CoA</name>
        <dbReference type="ChEBI" id="CHEBI:43074"/>
    </ligand>
</feature>
<feature type="binding site" evidence="1">
    <location>
        <position position="112"/>
    </location>
    <ligand>
        <name>(3S)-3-hydroxy-3-methylglutaryl-CoA</name>
        <dbReference type="ChEBI" id="CHEBI:43074"/>
    </ligand>
</feature>
<feature type="binding site" evidence="1">
    <location>
        <position position="153"/>
    </location>
    <ligand>
        <name>(3S)-3-hydroxy-3-methylglutaryl-CoA</name>
        <dbReference type="ChEBI" id="CHEBI:43074"/>
    </ligand>
</feature>
<feature type="binding site" evidence="1">
    <location>
        <position position="202"/>
    </location>
    <ligand>
        <name>(3S)-3-hydroxy-3-methylglutaryl-CoA</name>
        <dbReference type="ChEBI" id="CHEBI:43074"/>
    </ligand>
</feature>
<feature type="binding site" evidence="1">
    <location>
        <position position="235"/>
    </location>
    <ligand>
        <name>(3S)-3-hydroxy-3-methylglutaryl-CoA</name>
        <dbReference type="ChEBI" id="CHEBI:43074"/>
    </ligand>
</feature>
<feature type="binding site" evidence="1">
    <location>
        <position position="240"/>
    </location>
    <ligand>
        <name>CoA</name>
        <dbReference type="ChEBI" id="CHEBI:57287"/>
        <note>ligand shared with acetoacetyl-CoA thiolase</note>
    </ligand>
</feature>
<feature type="binding site" evidence="1">
    <location>
        <position position="267"/>
    </location>
    <ligand>
        <name>(3S)-3-hydroxy-3-methylglutaryl-CoA</name>
        <dbReference type="ChEBI" id="CHEBI:43074"/>
    </ligand>
</feature>
<feature type="binding site" evidence="1">
    <location>
        <position position="297"/>
    </location>
    <ligand>
        <name>(3S)-3-hydroxy-3-methylglutaryl-CoA</name>
        <dbReference type="ChEBI" id="CHEBI:43074"/>
    </ligand>
</feature>
<evidence type="ECO:0000255" key="1">
    <source>
        <dbReference type="HAMAP-Rule" id="MF_01409"/>
    </source>
</evidence>
<organism>
    <name type="scientific">Sulfolobus acidocaldarius (strain ATCC 33909 / DSM 639 / JCM 8929 / NBRC 15157 / NCIMB 11770)</name>
    <dbReference type="NCBI Taxonomy" id="330779"/>
    <lineage>
        <taxon>Archaea</taxon>
        <taxon>Thermoproteota</taxon>
        <taxon>Thermoprotei</taxon>
        <taxon>Sulfolobales</taxon>
        <taxon>Sulfolobaceae</taxon>
        <taxon>Sulfolobus</taxon>
    </lineage>
</organism>
<dbReference type="EC" id="2.3.3.10" evidence="1"/>
<dbReference type="EMBL" id="CP000077">
    <property type="protein sequence ID" value="AAY80697.1"/>
    <property type="molecule type" value="Genomic_DNA"/>
</dbReference>
<dbReference type="RefSeq" id="WP_011278199.1">
    <property type="nucleotide sequence ID" value="NC_007181.1"/>
</dbReference>
<dbReference type="SMR" id="Q4J933"/>
<dbReference type="STRING" id="330779.Saci_1362"/>
<dbReference type="GeneID" id="14551865"/>
<dbReference type="KEGG" id="sai:Saci_1362"/>
<dbReference type="PATRIC" id="fig|330779.12.peg.1315"/>
<dbReference type="eggNOG" id="arCOG01767">
    <property type="taxonomic scope" value="Archaea"/>
</dbReference>
<dbReference type="HOGENOM" id="CLU_039592_7_0_2"/>
<dbReference type="UniPathway" id="UPA00058">
    <property type="reaction ID" value="UER00102"/>
</dbReference>
<dbReference type="Proteomes" id="UP000001018">
    <property type="component" value="Chromosome"/>
</dbReference>
<dbReference type="GO" id="GO:0003985">
    <property type="term" value="F:acetyl-CoA C-acetyltransferase activity"/>
    <property type="evidence" value="ECO:0007669"/>
    <property type="project" value="UniProtKB-UniRule"/>
</dbReference>
<dbReference type="GO" id="GO:0004421">
    <property type="term" value="F:hydroxymethylglutaryl-CoA synthase activity"/>
    <property type="evidence" value="ECO:0007669"/>
    <property type="project" value="InterPro"/>
</dbReference>
<dbReference type="GO" id="GO:0010142">
    <property type="term" value="P:farnesyl diphosphate biosynthetic process, mevalonate pathway"/>
    <property type="evidence" value="ECO:0007669"/>
    <property type="project" value="TreeGrafter"/>
</dbReference>
<dbReference type="GO" id="GO:0019287">
    <property type="term" value="P:isopentenyl diphosphate biosynthetic process, mevalonate pathway"/>
    <property type="evidence" value="ECO:0007669"/>
    <property type="project" value="UniProtKB-UniRule"/>
</dbReference>
<dbReference type="CDD" id="cd00827">
    <property type="entry name" value="init_cond_enzymes"/>
    <property type="match status" value="1"/>
</dbReference>
<dbReference type="FunFam" id="3.40.47.10:FF:000046">
    <property type="entry name" value="UPF0219 protein M1627_1703"/>
    <property type="match status" value="1"/>
</dbReference>
<dbReference type="Gene3D" id="3.40.47.10">
    <property type="match status" value="1"/>
</dbReference>
<dbReference type="HAMAP" id="MF_01409">
    <property type="entry name" value="HMG_CoA_synth_arch"/>
    <property type="match status" value="1"/>
</dbReference>
<dbReference type="InterPro" id="IPR013747">
    <property type="entry name" value="ACP_syn_III_C"/>
</dbReference>
<dbReference type="InterPro" id="IPR013528">
    <property type="entry name" value="HMG_CoA_synth_N"/>
</dbReference>
<dbReference type="InterPro" id="IPR004656">
    <property type="entry name" value="HMG_CoA_Synthase"/>
</dbReference>
<dbReference type="InterPro" id="IPR016039">
    <property type="entry name" value="Thiolase-like"/>
</dbReference>
<dbReference type="NCBIfam" id="TIGR00748">
    <property type="entry name" value="HMG_CoA_syn_Arc"/>
    <property type="match status" value="1"/>
</dbReference>
<dbReference type="NCBIfam" id="NF003274">
    <property type="entry name" value="PRK04262.1"/>
    <property type="match status" value="1"/>
</dbReference>
<dbReference type="PANTHER" id="PTHR43323">
    <property type="entry name" value="3-HYDROXY-3-METHYLGLUTARYL COENZYME A SYNTHASE"/>
    <property type="match status" value="1"/>
</dbReference>
<dbReference type="PANTHER" id="PTHR43323:SF2">
    <property type="entry name" value="HYDROXYMETHYLGLUTARYL-COA SYNTHASE"/>
    <property type="match status" value="1"/>
</dbReference>
<dbReference type="Pfam" id="PF08541">
    <property type="entry name" value="ACP_syn_III_C"/>
    <property type="match status" value="1"/>
</dbReference>
<dbReference type="Pfam" id="PF01154">
    <property type="entry name" value="HMG_CoA_synt_N"/>
    <property type="match status" value="1"/>
</dbReference>
<dbReference type="SUPFAM" id="SSF53901">
    <property type="entry name" value="Thiolase-like"/>
    <property type="match status" value="2"/>
</dbReference>
<protein>
    <recommendedName>
        <fullName evidence="1">Hydroxymethylglutaryl-CoA synthase</fullName>
        <shortName evidence="1">HMG-CoA synthase</shortName>
        <shortName evidence="1">HMGCS</shortName>
        <ecNumber evidence="1">2.3.3.10</ecNumber>
    </recommendedName>
</protein>
<proteinExistence type="inferred from homology"/>
<reference key="1">
    <citation type="journal article" date="2005" name="J. Bacteriol.">
        <title>The genome of Sulfolobus acidocaldarius, a model organism of the Crenarchaeota.</title>
        <authorList>
            <person name="Chen L."/>
            <person name="Bruegger K."/>
            <person name="Skovgaard M."/>
            <person name="Redder P."/>
            <person name="She Q."/>
            <person name="Torarinsson E."/>
            <person name="Greve B."/>
            <person name="Awayez M."/>
            <person name="Zibat A."/>
            <person name="Klenk H.-P."/>
            <person name="Garrett R.A."/>
        </authorList>
    </citation>
    <scope>NUCLEOTIDE SEQUENCE [LARGE SCALE GENOMIC DNA]</scope>
    <source>
        <strain>ATCC 33909 / DSM 639 / JCM 8929 / NBRC 15157 / NCIMB 11770</strain>
    </source>
</reference>
<gene>
    <name type="ordered locus">Saci_1362</name>
</gene>
<keyword id="KW-0012">Acyltransferase</keyword>
<keyword id="KW-0414">Isoprene biosynthesis</keyword>
<keyword id="KW-1185">Reference proteome</keyword>
<keyword id="KW-0808">Transferase</keyword>
<accession>Q4J933</accession>